<protein>
    <recommendedName>
        <fullName evidence="1">Small ribosomal subunit protein uS14</fullName>
    </recommendedName>
    <alternativeName>
        <fullName evidence="2">30S ribosomal protein S14</fullName>
    </alternativeName>
</protein>
<accession>B5YTM8</accession>
<proteinExistence type="inferred from homology"/>
<organism>
    <name type="scientific">Escherichia coli O157:H7 (strain EC4115 / EHEC)</name>
    <dbReference type="NCBI Taxonomy" id="444450"/>
    <lineage>
        <taxon>Bacteria</taxon>
        <taxon>Pseudomonadati</taxon>
        <taxon>Pseudomonadota</taxon>
        <taxon>Gammaproteobacteria</taxon>
        <taxon>Enterobacterales</taxon>
        <taxon>Enterobacteriaceae</taxon>
        <taxon>Escherichia</taxon>
    </lineage>
</organism>
<reference key="1">
    <citation type="journal article" date="2011" name="Proc. Natl. Acad. Sci. U.S.A.">
        <title>Genomic anatomy of Escherichia coli O157:H7 outbreaks.</title>
        <authorList>
            <person name="Eppinger M."/>
            <person name="Mammel M.K."/>
            <person name="Leclerc J.E."/>
            <person name="Ravel J."/>
            <person name="Cebula T.A."/>
        </authorList>
    </citation>
    <scope>NUCLEOTIDE SEQUENCE [LARGE SCALE GENOMIC DNA]</scope>
    <source>
        <strain>EC4115 / EHEC</strain>
    </source>
</reference>
<feature type="chain" id="PRO_1000128383" description="Small ribosomal subunit protein uS14">
    <location>
        <begin position="1"/>
        <end position="101"/>
    </location>
</feature>
<keyword id="KW-0687">Ribonucleoprotein</keyword>
<keyword id="KW-0689">Ribosomal protein</keyword>
<keyword id="KW-0694">RNA-binding</keyword>
<keyword id="KW-0699">rRNA-binding</keyword>
<dbReference type="EMBL" id="CP001164">
    <property type="protein sequence ID" value="ACI39418.1"/>
    <property type="molecule type" value="Genomic_DNA"/>
</dbReference>
<dbReference type="RefSeq" id="WP_001118930.1">
    <property type="nucleotide sequence ID" value="NC_011353.1"/>
</dbReference>
<dbReference type="SMR" id="B5YTM8"/>
<dbReference type="GeneID" id="93778680"/>
<dbReference type="KEGG" id="ecf:ECH74115_4630"/>
<dbReference type="HOGENOM" id="CLU_139869_0_1_6"/>
<dbReference type="GO" id="GO:0005737">
    <property type="term" value="C:cytoplasm"/>
    <property type="evidence" value="ECO:0007669"/>
    <property type="project" value="UniProtKB-ARBA"/>
</dbReference>
<dbReference type="GO" id="GO:0015935">
    <property type="term" value="C:small ribosomal subunit"/>
    <property type="evidence" value="ECO:0007669"/>
    <property type="project" value="TreeGrafter"/>
</dbReference>
<dbReference type="GO" id="GO:0019843">
    <property type="term" value="F:rRNA binding"/>
    <property type="evidence" value="ECO:0007669"/>
    <property type="project" value="UniProtKB-UniRule"/>
</dbReference>
<dbReference type="GO" id="GO:0003735">
    <property type="term" value="F:structural constituent of ribosome"/>
    <property type="evidence" value="ECO:0007669"/>
    <property type="project" value="InterPro"/>
</dbReference>
<dbReference type="GO" id="GO:0006412">
    <property type="term" value="P:translation"/>
    <property type="evidence" value="ECO:0007669"/>
    <property type="project" value="UniProtKB-UniRule"/>
</dbReference>
<dbReference type="FunFam" id="1.10.287.1480:FF:000001">
    <property type="entry name" value="30S ribosomal protein S14"/>
    <property type="match status" value="1"/>
</dbReference>
<dbReference type="Gene3D" id="1.10.287.1480">
    <property type="match status" value="1"/>
</dbReference>
<dbReference type="HAMAP" id="MF_00537">
    <property type="entry name" value="Ribosomal_uS14_1"/>
    <property type="match status" value="1"/>
</dbReference>
<dbReference type="InterPro" id="IPR001209">
    <property type="entry name" value="Ribosomal_uS14"/>
</dbReference>
<dbReference type="InterPro" id="IPR023036">
    <property type="entry name" value="Ribosomal_uS14_bac/plastid"/>
</dbReference>
<dbReference type="InterPro" id="IPR018271">
    <property type="entry name" value="Ribosomal_uS14_CS"/>
</dbReference>
<dbReference type="NCBIfam" id="NF006477">
    <property type="entry name" value="PRK08881.1"/>
    <property type="match status" value="1"/>
</dbReference>
<dbReference type="PANTHER" id="PTHR19836">
    <property type="entry name" value="30S RIBOSOMAL PROTEIN S14"/>
    <property type="match status" value="1"/>
</dbReference>
<dbReference type="PANTHER" id="PTHR19836:SF19">
    <property type="entry name" value="SMALL RIBOSOMAL SUBUNIT PROTEIN US14M"/>
    <property type="match status" value="1"/>
</dbReference>
<dbReference type="Pfam" id="PF00253">
    <property type="entry name" value="Ribosomal_S14"/>
    <property type="match status" value="1"/>
</dbReference>
<dbReference type="SUPFAM" id="SSF57716">
    <property type="entry name" value="Glucocorticoid receptor-like (DNA-binding domain)"/>
    <property type="match status" value="1"/>
</dbReference>
<dbReference type="PROSITE" id="PS00527">
    <property type="entry name" value="RIBOSOMAL_S14"/>
    <property type="match status" value="1"/>
</dbReference>
<comment type="function">
    <text evidence="1">Binds 16S rRNA, required for the assembly of 30S particles and may also be responsible for determining the conformation of the 16S rRNA at the A site.</text>
</comment>
<comment type="subunit">
    <text evidence="1">Part of the 30S ribosomal subunit. Contacts proteins S3 and S10.</text>
</comment>
<comment type="similarity">
    <text evidence="1">Belongs to the universal ribosomal protein uS14 family.</text>
</comment>
<name>RS14_ECO5E</name>
<evidence type="ECO:0000255" key="1">
    <source>
        <dbReference type="HAMAP-Rule" id="MF_00537"/>
    </source>
</evidence>
<evidence type="ECO:0000305" key="2"/>
<gene>
    <name evidence="1" type="primary">rpsN</name>
    <name type="ordered locus">ECH74115_4630</name>
</gene>
<sequence>MAKQSMKAREVKRVALADKYFAKRAELKAIISDVNASDEDRWNAVLKLQTLPRDSSPSRQRNRCRQTGRPHGFLRKFGLSRIKVREAAMRGEIPGLKKASW</sequence>